<proteinExistence type="inferred from homology"/>
<evidence type="ECO:0000303" key="1">
    <source>
    </source>
</evidence>
<evidence type="ECO:0000305" key="2"/>
<name>MTHD_HAEIN</name>
<comment type="function">
    <text evidence="1">A gamma subtype methylase, recognizes the double-stranded sequence 5'-GTYRAC-3', methylates A-5 on both strands, and protects the DNA from cleavage by the HindII endonuclease.</text>
</comment>
<comment type="catalytic activity">
    <reaction>
        <text>a 2'-deoxyadenosine in DNA + S-adenosyl-L-methionine = an N(6)-methyl-2'-deoxyadenosine in DNA + S-adenosyl-L-homocysteine + H(+)</text>
        <dbReference type="Rhea" id="RHEA:15197"/>
        <dbReference type="Rhea" id="RHEA-COMP:12418"/>
        <dbReference type="Rhea" id="RHEA-COMP:12419"/>
        <dbReference type="ChEBI" id="CHEBI:15378"/>
        <dbReference type="ChEBI" id="CHEBI:57856"/>
        <dbReference type="ChEBI" id="CHEBI:59789"/>
        <dbReference type="ChEBI" id="CHEBI:90615"/>
        <dbReference type="ChEBI" id="CHEBI:90616"/>
        <dbReference type="EC" id="2.1.1.72"/>
    </reaction>
</comment>
<comment type="similarity">
    <text evidence="2">Belongs to the N(4)/N(6)-methyltransferase family.</text>
</comment>
<protein>
    <recommendedName>
        <fullName evidence="1">Type II methyltransferase M.HindII</fullName>
        <shortName evidence="1">M.HindII</shortName>
        <ecNumber>2.1.1.72</ecNumber>
    </recommendedName>
    <alternativeName>
        <fullName>Adenine-specific methyltransferase HindII</fullName>
    </alternativeName>
    <alternativeName>
        <fullName>Modification methylase HindII</fullName>
    </alternativeName>
</protein>
<accession>P44414</accession>
<organism>
    <name type="scientific">Haemophilus influenzae (strain ATCC 51907 / DSM 11121 / KW20 / Rd)</name>
    <dbReference type="NCBI Taxonomy" id="71421"/>
    <lineage>
        <taxon>Bacteria</taxon>
        <taxon>Pseudomonadati</taxon>
        <taxon>Pseudomonadota</taxon>
        <taxon>Gammaproteobacteria</taxon>
        <taxon>Pasteurellales</taxon>
        <taxon>Pasteurellaceae</taxon>
        <taxon>Haemophilus</taxon>
    </lineage>
</organism>
<keyword id="KW-0238">DNA-binding</keyword>
<keyword id="KW-0489">Methyltransferase</keyword>
<keyword id="KW-1185">Reference proteome</keyword>
<keyword id="KW-0680">Restriction system</keyword>
<keyword id="KW-0949">S-adenosyl-L-methionine</keyword>
<keyword id="KW-0808">Transferase</keyword>
<reference key="1">
    <citation type="journal article" date="1995" name="Science">
        <title>Whole-genome random sequencing and assembly of Haemophilus influenzae Rd.</title>
        <authorList>
            <person name="Fleischmann R.D."/>
            <person name="Adams M.D."/>
            <person name="White O."/>
            <person name="Clayton R.A."/>
            <person name="Kirkness E.F."/>
            <person name="Kerlavage A.R."/>
            <person name="Bult C.J."/>
            <person name="Tomb J.-F."/>
            <person name="Dougherty B.A."/>
            <person name="Merrick J.M."/>
            <person name="McKenney K."/>
            <person name="Sutton G.G."/>
            <person name="FitzHugh W."/>
            <person name="Fields C.A."/>
            <person name="Gocayne J.D."/>
            <person name="Scott J.D."/>
            <person name="Shirley R."/>
            <person name="Liu L.-I."/>
            <person name="Glodek A."/>
            <person name="Kelley J.M."/>
            <person name="Weidman J.F."/>
            <person name="Phillips C.A."/>
            <person name="Spriggs T."/>
            <person name="Hedblom E."/>
            <person name="Cotton M.D."/>
            <person name="Utterback T.R."/>
            <person name="Hanna M.C."/>
            <person name="Nguyen D.T."/>
            <person name="Saudek D.M."/>
            <person name="Brandon R.C."/>
            <person name="Fine L.D."/>
            <person name="Fritchman J.L."/>
            <person name="Fuhrmann J.L."/>
            <person name="Geoghagen N.S.M."/>
            <person name="Gnehm C.L."/>
            <person name="McDonald L.A."/>
            <person name="Small K.V."/>
            <person name="Fraser C.M."/>
            <person name="Smith H.O."/>
            <person name="Venter J.C."/>
        </authorList>
    </citation>
    <scope>NUCLEOTIDE SEQUENCE [LARGE SCALE GENOMIC DNA]</scope>
    <source>
        <strain>ATCC 51907 / DSM 11121 / KW20 / Rd</strain>
    </source>
</reference>
<reference key="2">
    <citation type="journal article" date="2003" name="Nucleic Acids Res.">
        <title>A nomenclature for restriction enzymes, DNA methyltransferases, homing endonucleases and their genes.</title>
        <authorList>
            <person name="Roberts R.J."/>
            <person name="Belfort M."/>
            <person name="Bestor T."/>
            <person name="Bhagwat A.S."/>
            <person name="Bickle T.A."/>
            <person name="Bitinaite J."/>
            <person name="Blumenthal R.M."/>
            <person name="Degtyarev S.K."/>
            <person name="Dryden D.T."/>
            <person name="Dybvig K."/>
            <person name="Firman K."/>
            <person name="Gromova E.S."/>
            <person name="Gumport R.I."/>
            <person name="Halford S.E."/>
            <person name="Hattman S."/>
            <person name="Heitman J."/>
            <person name="Hornby D.P."/>
            <person name="Janulaitis A."/>
            <person name="Jeltsch A."/>
            <person name="Josephsen J."/>
            <person name="Kiss A."/>
            <person name="Klaenhammer T.R."/>
            <person name="Kobayashi I."/>
            <person name="Kong H."/>
            <person name="Krueger D.H."/>
            <person name="Lacks S."/>
            <person name="Marinus M.G."/>
            <person name="Miyahara M."/>
            <person name="Morgan R.D."/>
            <person name="Murray N.E."/>
            <person name="Nagaraja V."/>
            <person name="Piekarowicz A."/>
            <person name="Pingoud A."/>
            <person name="Raleigh E."/>
            <person name="Rao D.N."/>
            <person name="Reich N."/>
            <person name="Repin V.E."/>
            <person name="Selker E.U."/>
            <person name="Shaw P.C."/>
            <person name="Stein D.C."/>
            <person name="Stoddard B.L."/>
            <person name="Szybalski W."/>
            <person name="Trautner T.A."/>
            <person name="Van Etten J.L."/>
            <person name="Vitor J.M."/>
            <person name="Wilson G.G."/>
            <person name="Xu S.Y."/>
        </authorList>
    </citation>
    <scope>NOMENCLATURE</scope>
    <scope>SUBTYPE</scope>
</reference>
<gene>
    <name type="primary">hindIIM</name>
    <name type="ordered locus">HI_0513</name>
</gene>
<feature type="chain" id="PRO_0000087974" description="Type II methyltransferase M.HindII">
    <location>
        <begin position="1"/>
        <end position="518"/>
    </location>
</feature>
<dbReference type="EC" id="2.1.1.72"/>
<dbReference type="EMBL" id="L42023">
    <property type="protein sequence ID" value="AAC22171.1"/>
    <property type="molecule type" value="Genomic_DNA"/>
</dbReference>
<dbReference type="PIR" id="F64073">
    <property type="entry name" value="F64073"/>
</dbReference>
<dbReference type="RefSeq" id="NP_438671.1">
    <property type="nucleotide sequence ID" value="NC_000907.1"/>
</dbReference>
<dbReference type="SMR" id="P44414"/>
<dbReference type="STRING" id="71421.HI_0513"/>
<dbReference type="REBASE" id="3427">
    <property type="entry name" value="M.HindII"/>
</dbReference>
<dbReference type="EnsemblBacteria" id="AAC22171">
    <property type="protein sequence ID" value="AAC22171"/>
    <property type="gene ID" value="HI_0513"/>
</dbReference>
<dbReference type="KEGG" id="hin:HI_0513"/>
<dbReference type="PATRIC" id="fig|71421.8.peg.532"/>
<dbReference type="eggNOG" id="COG0827">
    <property type="taxonomic scope" value="Bacteria"/>
</dbReference>
<dbReference type="HOGENOM" id="CLU_508657_0_0_6"/>
<dbReference type="OrthoDB" id="9782445at2"/>
<dbReference type="PhylomeDB" id="P44414"/>
<dbReference type="BioCyc" id="HINF71421:G1GJ1-526-MONOMER"/>
<dbReference type="PRO" id="PR:P44414"/>
<dbReference type="Proteomes" id="UP000000579">
    <property type="component" value="Chromosome"/>
</dbReference>
<dbReference type="GO" id="GO:0003677">
    <property type="term" value="F:DNA binding"/>
    <property type="evidence" value="ECO:0007669"/>
    <property type="project" value="UniProtKB-KW"/>
</dbReference>
<dbReference type="GO" id="GO:0008170">
    <property type="term" value="F:N-methyltransferase activity"/>
    <property type="evidence" value="ECO:0007669"/>
    <property type="project" value="InterPro"/>
</dbReference>
<dbReference type="GO" id="GO:0009007">
    <property type="term" value="F:site-specific DNA-methyltransferase (adenine-specific) activity"/>
    <property type="evidence" value="ECO:0007669"/>
    <property type="project" value="UniProtKB-EC"/>
</dbReference>
<dbReference type="GO" id="GO:0009307">
    <property type="term" value="P:DNA restriction-modification system"/>
    <property type="evidence" value="ECO:0007669"/>
    <property type="project" value="UniProtKB-KW"/>
</dbReference>
<dbReference type="GO" id="GO:0032259">
    <property type="term" value="P:methylation"/>
    <property type="evidence" value="ECO:0007669"/>
    <property type="project" value="UniProtKB-KW"/>
</dbReference>
<dbReference type="Gene3D" id="3.40.50.150">
    <property type="entry name" value="Vaccinia Virus protein VP39"/>
    <property type="match status" value="1"/>
</dbReference>
<dbReference type="InterPro" id="IPR003356">
    <property type="entry name" value="DNA_methylase_A-5"/>
</dbReference>
<dbReference type="InterPro" id="IPR002052">
    <property type="entry name" value="DNA_methylase_N6_adenine_CS"/>
</dbReference>
<dbReference type="InterPro" id="IPR011639">
    <property type="entry name" value="MethylTrfase_TaqI-like_dom"/>
</dbReference>
<dbReference type="InterPro" id="IPR050953">
    <property type="entry name" value="N4_N6_ade-DNA_methylase"/>
</dbReference>
<dbReference type="InterPro" id="IPR029063">
    <property type="entry name" value="SAM-dependent_MTases_sf"/>
</dbReference>
<dbReference type="PANTHER" id="PTHR33841">
    <property type="entry name" value="DNA METHYLTRANSFERASE YEEA-RELATED"/>
    <property type="match status" value="1"/>
</dbReference>
<dbReference type="PANTHER" id="PTHR33841:SF6">
    <property type="entry name" value="TYPE II METHYLTRANSFERASE M.HINDII"/>
    <property type="match status" value="1"/>
</dbReference>
<dbReference type="Pfam" id="PF07669">
    <property type="entry name" value="Eco57I"/>
    <property type="match status" value="1"/>
</dbReference>
<dbReference type="Pfam" id="PF02384">
    <property type="entry name" value="N6_Mtase"/>
    <property type="match status" value="1"/>
</dbReference>
<dbReference type="PRINTS" id="PR00507">
    <property type="entry name" value="N12N6MTFRASE"/>
</dbReference>
<dbReference type="SUPFAM" id="SSF53335">
    <property type="entry name" value="S-adenosyl-L-methionine-dependent methyltransferases"/>
    <property type="match status" value="1"/>
</dbReference>
<dbReference type="PROSITE" id="PS00092">
    <property type="entry name" value="N6_MTASE"/>
    <property type="match status" value="1"/>
</dbReference>
<sequence length="518" mass="60410">MDESKKISLGQFFTPTHIVKYMIGLMTKNKNASILEPSSGNGVFLDSLIQLGYTNLTSYEIDGDIISHPFVINSSFITSYDKPQYDSIIGNPPYVRWKNLSELQKKELKDNSIWKMYCNSLCDYFYIFIIKSILQLKVGGELIFICPDYFFSTKNAEGLRKFLINNGSFEKIILFNESKVFHGVSSSVVIFKYIKGKNIDNINIINIDSKSPIKSEDIESLGESYYIPRFSSSDVWVTSPNHIKVALDKFESYCKTIKKVQPKSLFDDLEFSRIGSVCDIGNGMVSGLDKAFQMNDINYSELELLNSICVAKAKHLDAFCFSGYTRYKFILDDINEDKLITYFPNFFYEFNNYKDYLLKRYSYNKYLPYWKWAFLRNFSLFSKNEKKIFVPCKERISKKSNFRFSLVDEFIYPTQDVTALYKKENVKESIEYITAYLNSKAVFLWMKYKGVVKGNVVEFSEKPLANIPFRRIDWQLKSEKKIHDDITNLVRKYLSNKEFSILHEINLNLEKLGIKVEI</sequence>